<protein>
    <recommendedName>
        <fullName evidence="1">Ribosome-recycling factor</fullName>
        <shortName evidence="1">RRF</shortName>
    </recommendedName>
    <alternativeName>
        <fullName evidence="1">Ribosome-releasing factor</fullName>
    </alternativeName>
</protein>
<comment type="function">
    <text evidence="1">Responsible for the release of ribosomes from messenger RNA at the termination of protein biosynthesis. May increase the efficiency of translation by recycling ribosomes from one round of translation to another.</text>
</comment>
<comment type="subcellular location">
    <subcellularLocation>
        <location evidence="1">Cytoplasm</location>
    </subcellularLocation>
</comment>
<comment type="similarity">
    <text evidence="1">Belongs to the RRF family.</text>
</comment>
<dbReference type="EMBL" id="CP000749">
    <property type="protein sequence ID" value="ABR70204.1"/>
    <property type="molecule type" value="Genomic_DNA"/>
</dbReference>
<dbReference type="SMR" id="A6VUS5"/>
<dbReference type="STRING" id="400668.Mmwyl1_1275"/>
<dbReference type="KEGG" id="mmw:Mmwyl1_1275"/>
<dbReference type="eggNOG" id="COG0233">
    <property type="taxonomic scope" value="Bacteria"/>
</dbReference>
<dbReference type="HOGENOM" id="CLU_073981_2_1_6"/>
<dbReference type="OrthoDB" id="9804006at2"/>
<dbReference type="GO" id="GO:0005829">
    <property type="term" value="C:cytosol"/>
    <property type="evidence" value="ECO:0007669"/>
    <property type="project" value="GOC"/>
</dbReference>
<dbReference type="GO" id="GO:0043023">
    <property type="term" value="F:ribosomal large subunit binding"/>
    <property type="evidence" value="ECO:0007669"/>
    <property type="project" value="TreeGrafter"/>
</dbReference>
<dbReference type="GO" id="GO:0002184">
    <property type="term" value="P:cytoplasmic translational termination"/>
    <property type="evidence" value="ECO:0007669"/>
    <property type="project" value="TreeGrafter"/>
</dbReference>
<dbReference type="CDD" id="cd00520">
    <property type="entry name" value="RRF"/>
    <property type="match status" value="1"/>
</dbReference>
<dbReference type="FunFam" id="1.10.132.20:FF:000001">
    <property type="entry name" value="Ribosome-recycling factor"/>
    <property type="match status" value="1"/>
</dbReference>
<dbReference type="FunFam" id="3.30.1360.40:FF:000001">
    <property type="entry name" value="Ribosome-recycling factor"/>
    <property type="match status" value="1"/>
</dbReference>
<dbReference type="Gene3D" id="3.30.1360.40">
    <property type="match status" value="1"/>
</dbReference>
<dbReference type="Gene3D" id="1.10.132.20">
    <property type="entry name" value="Ribosome-recycling factor"/>
    <property type="match status" value="1"/>
</dbReference>
<dbReference type="HAMAP" id="MF_00040">
    <property type="entry name" value="RRF"/>
    <property type="match status" value="1"/>
</dbReference>
<dbReference type="InterPro" id="IPR002661">
    <property type="entry name" value="Ribosome_recyc_fac"/>
</dbReference>
<dbReference type="InterPro" id="IPR023584">
    <property type="entry name" value="Ribosome_recyc_fac_dom"/>
</dbReference>
<dbReference type="InterPro" id="IPR036191">
    <property type="entry name" value="RRF_sf"/>
</dbReference>
<dbReference type="NCBIfam" id="TIGR00496">
    <property type="entry name" value="frr"/>
    <property type="match status" value="1"/>
</dbReference>
<dbReference type="PANTHER" id="PTHR20982:SF3">
    <property type="entry name" value="MITOCHONDRIAL RIBOSOME RECYCLING FACTOR PSEUDO 1"/>
    <property type="match status" value="1"/>
</dbReference>
<dbReference type="PANTHER" id="PTHR20982">
    <property type="entry name" value="RIBOSOME RECYCLING FACTOR"/>
    <property type="match status" value="1"/>
</dbReference>
<dbReference type="Pfam" id="PF01765">
    <property type="entry name" value="RRF"/>
    <property type="match status" value="1"/>
</dbReference>
<dbReference type="SUPFAM" id="SSF55194">
    <property type="entry name" value="Ribosome recycling factor, RRF"/>
    <property type="match status" value="1"/>
</dbReference>
<name>RRF_MARMS</name>
<feature type="chain" id="PRO_1000074585" description="Ribosome-recycling factor">
    <location>
        <begin position="1"/>
        <end position="185"/>
    </location>
</feature>
<evidence type="ECO:0000255" key="1">
    <source>
        <dbReference type="HAMAP-Rule" id="MF_00040"/>
    </source>
</evidence>
<proteinExistence type="inferred from homology"/>
<reference key="1">
    <citation type="submission" date="2007-06" db="EMBL/GenBank/DDBJ databases">
        <title>Complete sequence of Marinomonas sp. MWYL1.</title>
        <authorList>
            <consortium name="US DOE Joint Genome Institute"/>
            <person name="Copeland A."/>
            <person name="Lucas S."/>
            <person name="Lapidus A."/>
            <person name="Barry K."/>
            <person name="Glavina del Rio T."/>
            <person name="Dalin E."/>
            <person name="Tice H."/>
            <person name="Pitluck S."/>
            <person name="Kiss H."/>
            <person name="Brettin T."/>
            <person name="Bruce D."/>
            <person name="Detter J.C."/>
            <person name="Han C."/>
            <person name="Schmutz J."/>
            <person name="Larimer F."/>
            <person name="Land M."/>
            <person name="Hauser L."/>
            <person name="Kyrpides N."/>
            <person name="Kim E."/>
            <person name="Johnston A.W.B."/>
            <person name="Todd J.D."/>
            <person name="Rogers R."/>
            <person name="Wexler M."/>
            <person name="Bond P.L."/>
            <person name="Li Y."/>
            <person name="Richardson P."/>
        </authorList>
    </citation>
    <scope>NUCLEOTIDE SEQUENCE [LARGE SCALE GENOMIC DNA]</scope>
    <source>
        <strain>MWYL1</strain>
    </source>
</reference>
<accession>A6VUS5</accession>
<gene>
    <name evidence="1" type="primary">frr</name>
    <name type="ordered locus">Mmwyl1_1275</name>
</gene>
<organism>
    <name type="scientific">Marinomonas sp. (strain MWYL1)</name>
    <dbReference type="NCBI Taxonomy" id="400668"/>
    <lineage>
        <taxon>Bacteria</taxon>
        <taxon>Pseudomonadati</taxon>
        <taxon>Pseudomonadota</taxon>
        <taxon>Gammaproteobacteria</taxon>
        <taxon>Oceanospirillales</taxon>
        <taxon>Oceanospirillaceae</taxon>
        <taxon>Marinomonas</taxon>
    </lineage>
</organism>
<keyword id="KW-0963">Cytoplasm</keyword>
<keyword id="KW-0648">Protein biosynthesis</keyword>
<sequence length="185" mass="20825">MINEILKDAEDRMSKAVASVESAFKKIRTGRAHPSILDSVKVNYYGSETPLSQVANITVEDARTLGVSPWENNLVPEIEKAIMKSDLGLNPATNGNLIRIPMPALTEETRKNYFKQAKNEAENGRIAIRNIRRDANGSLKDLVKEKEISEDDDRRGQDQVQKVTDKYVAQIEERLAAKEKDLMEI</sequence>